<dbReference type="EMBL" id="CU329670">
    <property type="protein sequence ID" value="CAB11604.1"/>
    <property type="molecule type" value="Genomic_DNA"/>
</dbReference>
<dbReference type="PIR" id="T38388">
    <property type="entry name" value="T38388"/>
</dbReference>
<dbReference type="SMR" id="O13982"/>
<dbReference type="BioGRID" id="279168">
    <property type="interactions" value="4"/>
</dbReference>
<dbReference type="FunCoup" id="O13982">
    <property type="interactions" value="488"/>
</dbReference>
<dbReference type="STRING" id="284812.O13982"/>
<dbReference type="iPTMnet" id="O13982"/>
<dbReference type="PaxDb" id="4896-SPAC25H1.08c.1"/>
<dbReference type="EnsemblFungi" id="SPAC25H1.08c.1">
    <property type="protein sequence ID" value="SPAC25H1.08c.1:pep"/>
    <property type="gene ID" value="SPAC25H1.08c"/>
</dbReference>
<dbReference type="KEGG" id="spo:2542715"/>
<dbReference type="PomBase" id="SPAC25H1.08c"/>
<dbReference type="VEuPathDB" id="FungiDB:SPAC25H1.08c"/>
<dbReference type="eggNOG" id="KOG0296">
    <property type="taxonomic scope" value="Eukaryota"/>
</dbReference>
<dbReference type="HOGENOM" id="CLU_000288_57_9_1"/>
<dbReference type="InParanoid" id="O13982"/>
<dbReference type="OMA" id="GPDEVMW"/>
<dbReference type="PhylomeDB" id="O13982"/>
<dbReference type="PRO" id="PR:O13982"/>
<dbReference type="Proteomes" id="UP000002485">
    <property type="component" value="Chromosome I"/>
</dbReference>
<dbReference type="GO" id="GO:0005829">
    <property type="term" value="C:cytosol"/>
    <property type="evidence" value="ECO:0007005"/>
    <property type="project" value="PomBase"/>
</dbReference>
<dbReference type="GO" id="GO:0005634">
    <property type="term" value="C:nucleus"/>
    <property type="evidence" value="ECO:0007005"/>
    <property type="project" value="PomBase"/>
</dbReference>
<dbReference type="GO" id="GO:0030687">
    <property type="term" value="C:preribosome, large subunit precursor"/>
    <property type="evidence" value="ECO:0000266"/>
    <property type="project" value="PomBase"/>
</dbReference>
<dbReference type="GO" id="GO:0180023">
    <property type="term" value="P:cytosolic large ribosomal subunit assembly"/>
    <property type="evidence" value="ECO:0000266"/>
    <property type="project" value="PomBase"/>
</dbReference>
<dbReference type="CDD" id="cd00200">
    <property type="entry name" value="WD40"/>
    <property type="match status" value="1"/>
</dbReference>
<dbReference type="FunFam" id="2.130.10.10:FF:000074">
    <property type="entry name" value="Angio-associated migratory cell protein-like protein"/>
    <property type="match status" value="1"/>
</dbReference>
<dbReference type="Gene3D" id="2.130.10.10">
    <property type="entry name" value="YVTN repeat-like/Quinoprotein amine dehydrogenase"/>
    <property type="match status" value="1"/>
</dbReference>
<dbReference type="InterPro" id="IPR015943">
    <property type="entry name" value="WD40/YVTN_repeat-like_dom_sf"/>
</dbReference>
<dbReference type="InterPro" id="IPR036322">
    <property type="entry name" value="WD40_repeat_dom_sf"/>
</dbReference>
<dbReference type="InterPro" id="IPR001680">
    <property type="entry name" value="WD40_rpt"/>
</dbReference>
<dbReference type="InterPro" id="IPR051179">
    <property type="entry name" value="WD_repeat_multifunction"/>
</dbReference>
<dbReference type="PANTHER" id="PTHR19857:SF8">
    <property type="entry name" value="ANGIO-ASSOCIATED MIGRATORY CELL PROTEIN"/>
    <property type="match status" value="1"/>
</dbReference>
<dbReference type="PANTHER" id="PTHR19857">
    <property type="entry name" value="MITOCHONDRIAL DIVISION PROTEIN 1-RELATED"/>
    <property type="match status" value="1"/>
</dbReference>
<dbReference type="Pfam" id="PF00400">
    <property type="entry name" value="WD40"/>
    <property type="match status" value="5"/>
</dbReference>
<dbReference type="SMART" id="SM00320">
    <property type="entry name" value="WD40"/>
    <property type="match status" value="8"/>
</dbReference>
<dbReference type="SUPFAM" id="SSF50978">
    <property type="entry name" value="WD40 repeat-like"/>
    <property type="match status" value="1"/>
</dbReference>
<dbReference type="PROSITE" id="PS50082">
    <property type="entry name" value="WD_REPEATS_2"/>
    <property type="match status" value="5"/>
</dbReference>
<dbReference type="PROSITE" id="PS50294">
    <property type="entry name" value="WD_REPEATS_REGION"/>
    <property type="match status" value="1"/>
</dbReference>
<gene>
    <name type="ORF">SPAC25H1.08c</name>
</gene>
<name>YEC8_SCHPO</name>
<evidence type="ECO:0000269" key="1">
    <source>
    </source>
</evidence>
<sequence length="399" mass="43432">MAEEEENQELYIAENEVEEVIKDNDKLMDQGVTEDEAEQEQNDTMNNMVMDMSVQGFFEHKDSVFSVSINPVHSNLCASGGGDDLGYIWDITTGEQICQLTGHKDSIVAIDWSFDGTYIATGGMDSQVRLWKSSTGFEFITAFETVDEIVWLSWHPKGLFLAAGCNDGSIWMWSLPSGKVVQVMYGHTAPVNAGKFIPPGVGKRLATVDDSGTLIVWNPATGAPECRMSSDDHRFDPGNEETAAGWTSFDCNAEGNVLFLGGSSGKVKVVNINSSHILASLEAQTESVEAIALCTALPICACASVDGTVALYDSASLKFRKSLPHEQAVIDCKFLPNTPYLLTACADCVIRKWDVRSGQLLGEYTGHQEPILCMAITPDGKRVVTGSDDTELLVFDCEH</sequence>
<accession>O13982</accession>
<keyword id="KW-0963">Cytoplasm</keyword>
<keyword id="KW-0539">Nucleus</keyword>
<keyword id="KW-1185">Reference proteome</keyword>
<keyword id="KW-0677">Repeat</keyword>
<keyword id="KW-0853">WD repeat</keyword>
<reference key="1">
    <citation type="journal article" date="2002" name="Nature">
        <title>The genome sequence of Schizosaccharomyces pombe.</title>
        <authorList>
            <person name="Wood V."/>
            <person name="Gwilliam R."/>
            <person name="Rajandream M.A."/>
            <person name="Lyne M.H."/>
            <person name="Lyne R."/>
            <person name="Stewart A."/>
            <person name="Sgouros J.G."/>
            <person name="Peat N."/>
            <person name="Hayles J."/>
            <person name="Baker S.G."/>
            <person name="Basham D."/>
            <person name="Bowman S."/>
            <person name="Brooks K."/>
            <person name="Brown D."/>
            <person name="Brown S."/>
            <person name="Chillingworth T."/>
            <person name="Churcher C.M."/>
            <person name="Collins M."/>
            <person name="Connor R."/>
            <person name="Cronin A."/>
            <person name="Davis P."/>
            <person name="Feltwell T."/>
            <person name="Fraser A."/>
            <person name="Gentles S."/>
            <person name="Goble A."/>
            <person name="Hamlin N."/>
            <person name="Harris D.E."/>
            <person name="Hidalgo J."/>
            <person name="Hodgson G."/>
            <person name="Holroyd S."/>
            <person name="Hornsby T."/>
            <person name="Howarth S."/>
            <person name="Huckle E.J."/>
            <person name="Hunt S."/>
            <person name="Jagels K."/>
            <person name="James K.D."/>
            <person name="Jones L."/>
            <person name="Jones M."/>
            <person name="Leather S."/>
            <person name="McDonald S."/>
            <person name="McLean J."/>
            <person name="Mooney P."/>
            <person name="Moule S."/>
            <person name="Mungall K.L."/>
            <person name="Murphy L.D."/>
            <person name="Niblett D."/>
            <person name="Odell C."/>
            <person name="Oliver K."/>
            <person name="O'Neil S."/>
            <person name="Pearson D."/>
            <person name="Quail M.A."/>
            <person name="Rabbinowitsch E."/>
            <person name="Rutherford K.M."/>
            <person name="Rutter S."/>
            <person name="Saunders D."/>
            <person name="Seeger K."/>
            <person name="Sharp S."/>
            <person name="Skelton J."/>
            <person name="Simmonds M.N."/>
            <person name="Squares R."/>
            <person name="Squares S."/>
            <person name="Stevens K."/>
            <person name="Taylor K."/>
            <person name="Taylor R.G."/>
            <person name="Tivey A."/>
            <person name="Walsh S.V."/>
            <person name="Warren T."/>
            <person name="Whitehead S."/>
            <person name="Woodward J.R."/>
            <person name="Volckaert G."/>
            <person name="Aert R."/>
            <person name="Robben J."/>
            <person name="Grymonprez B."/>
            <person name="Weltjens I."/>
            <person name="Vanstreels E."/>
            <person name="Rieger M."/>
            <person name="Schaefer M."/>
            <person name="Mueller-Auer S."/>
            <person name="Gabel C."/>
            <person name="Fuchs M."/>
            <person name="Duesterhoeft A."/>
            <person name="Fritzc C."/>
            <person name="Holzer E."/>
            <person name="Moestl D."/>
            <person name="Hilbert H."/>
            <person name="Borzym K."/>
            <person name="Langer I."/>
            <person name="Beck A."/>
            <person name="Lehrach H."/>
            <person name="Reinhardt R."/>
            <person name="Pohl T.M."/>
            <person name="Eger P."/>
            <person name="Zimmermann W."/>
            <person name="Wedler H."/>
            <person name="Wambutt R."/>
            <person name="Purnelle B."/>
            <person name="Goffeau A."/>
            <person name="Cadieu E."/>
            <person name="Dreano S."/>
            <person name="Gloux S."/>
            <person name="Lelaure V."/>
            <person name="Mottier S."/>
            <person name="Galibert F."/>
            <person name="Aves S.J."/>
            <person name="Xiang Z."/>
            <person name="Hunt C."/>
            <person name="Moore K."/>
            <person name="Hurst S.M."/>
            <person name="Lucas M."/>
            <person name="Rochet M."/>
            <person name="Gaillardin C."/>
            <person name="Tallada V.A."/>
            <person name="Garzon A."/>
            <person name="Thode G."/>
            <person name="Daga R.R."/>
            <person name="Cruzado L."/>
            <person name="Jimenez J."/>
            <person name="Sanchez M."/>
            <person name="del Rey F."/>
            <person name="Benito J."/>
            <person name="Dominguez A."/>
            <person name="Revuelta J.L."/>
            <person name="Moreno S."/>
            <person name="Armstrong J."/>
            <person name="Forsburg S.L."/>
            <person name="Cerutti L."/>
            <person name="Lowe T."/>
            <person name="McCombie W.R."/>
            <person name="Paulsen I."/>
            <person name="Potashkin J."/>
            <person name="Shpakovski G.V."/>
            <person name="Ussery D."/>
            <person name="Barrell B.G."/>
            <person name="Nurse P."/>
        </authorList>
    </citation>
    <scope>NUCLEOTIDE SEQUENCE [LARGE SCALE GENOMIC DNA]</scope>
    <source>
        <strain>972 / ATCC 24843</strain>
    </source>
</reference>
<reference key="2">
    <citation type="journal article" date="2006" name="Nat. Biotechnol.">
        <title>ORFeome cloning and global analysis of protein localization in the fission yeast Schizosaccharomyces pombe.</title>
        <authorList>
            <person name="Matsuyama A."/>
            <person name="Arai R."/>
            <person name="Yashiroda Y."/>
            <person name="Shirai A."/>
            <person name="Kamata A."/>
            <person name="Sekido S."/>
            <person name="Kobayashi Y."/>
            <person name="Hashimoto A."/>
            <person name="Hamamoto M."/>
            <person name="Hiraoka Y."/>
            <person name="Horinouchi S."/>
            <person name="Yoshida M."/>
        </authorList>
    </citation>
    <scope>SUBCELLULAR LOCATION [LARGE SCALE ANALYSIS]</scope>
</reference>
<feature type="chain" id="PRO_0000316554" description="Uncharacterized WD repeat-containing protein C25H1.08c">
    <location>
        <begin position="1"/>
        <end position="399"/>
    </location>
</feature>
<feature type="repeat" description="WD 1">
    <location>
        <begin position="59"/>
        <end position="99"/>
    </location>
</feature>
<feature type="repeat" description="WD 2">
    <location>
        <begin position="102"/>
        <end position="141"/>
    </location>
</feature>
<feature type="repeat" description="WD 3">
    <location>
        <begin position="144"/>
        <end position="185"/>
    </location>
</feature>
<feature type="repeat" description="WD 4">
    <location>
        <begin position="187"/>
        <end position="227"/>
    </location>
</feature>
<feature type="repeat" description="WD 5">
    <location>
        <begin position="241"/>
        <end position="280"/>
    </location>
</feature>
<feature type="repeat" description="WD 6">
    <location>
        <begin position="283"/>
        <end position="322"/>
    </location>
</feature>
<feature type="repeat" description="WD 7">
    <location>
        <begin position="324"/>
        <end position="363"/>
    </location>
</feature>
<feature type="repeat" description="WD 8">
    <location>
        <begin position="366"/>
        <end position="399"/>
    </location>
</feature>
<protein>
    <recommendedName>
        <fullName>Uncharacterized WD repeat-containing protein C25H1.08c</fullName>
    </recommendedName>
</protein>
<comment type="subcellular location">
    <subcellularLocation>
        <location evidence="1">Cytoplasm</location>
    </subcellularLocation>
    <subcellularLocation>
        <location evidence="1">Nucleus</location>
    </subcellularLocation>
</comment>
<proteinExistence type="predicted"/>
<organism>
    <name type="scientific">Schizosaccharomyces pombe (strain 972 / ATCC 24843)</name>
    <name type="common">Fission yeast</name>
    <dbReference type="NCBI Taxonomy" id="284812"/>
    <lineage>
        <taxon>Eukaryota</taxon>
        <taxon>Fungi</taxon>
        <taxon>Dikarya</taxon>
        <taxon>Ascomycota</taxon>
        <taxon>Taphrinomycotina</taxon>
        <taxon>Schizosaccharomycetes</taxon>
        <taxon>Schizosaccharomycetales</taxon>
        <taxon>Schizosaccharomycetaceae</taxon>
        <taxon>Schizosaccharomyces</taxon>
    </lineage>
</organism>